<feature type="chain" id="PRO_0000321522" description="Histone-arginine methyltransferase METTL23">
    <location>
        <begin position="1"/>
        <end position="225"/>
    </location>
</feature>
<gene>
    <name evidence="4" type="primary">Mettl23</name>
</gene>
<accession>Q5RJL2</accession>
<reference key="1">
    <citation type="journal article" date="2004" name="Genome Res.">
        <title>The status, quality, and expansion of the NIH full-length cDNA project: the Mammalian Gene Collection (MGC).</title>
        <authorList>
            <consortium name="The MGC Project Team"/>
        </authorList>
    </citation>
    <scope>NUCLEOTIDE SEQUENCE [LARGE SCALE MRNA]</scope>
    <source>
        <tissue>Ovary</tissue>
    </source>
</reference>
<sequence>MAGARLFRFRDEPGPGADPTVLEVRVPQVLHVQYGMYVWPCAVVLAQYLWFHRRVLPGKAVLEIGAGVSLPGILAAKCGAKVTLSDSPELPHCLDICWQSCQMNNLPQVQIVGLTWGHISKDTLSLPPQDIILGSDVFFEPEDFESILATVYFLMQKNPKVQFWSTYQVRSADWSLEGLLYKWDMRCVHIPLESFDADKEDIAESTLPGRHTIEMLIISFAKDSS</sequence>
<evidence type="ECO:0000250" key="1">
    <source>
        <dbReference type="UniProtKB" id="A2AA28"/>
    </source>
</evidence>
<evidence type="ECO:0000250" key="2">
    <source>
        <dbReference type="UniProtKB" id="Q86XA0"/>
    </source>
</evidence>
<evidence type="ECO:0000305" key="3"/>
<evidence type="ECO:0000312" key="4">
    <source>
        <dbReference type="RGD" id="1306284"/>
    </source>
</evidence>
<keyword id="KW-0156">Chromatin regulator</keyword>
<keyword id="KW-0963">Cytoplasm</keyword>
<keyword id="KW-0217">Developmental protein</keyword>
<keyword id="KW-0489">Methyltransferase</keyword>
<keyword id="KW-0539">Nucleus</keyword>
<keyword id="KW-1185">Reference proteome</keyword>
<keyword id="KW-0949">S-adenosyl-L-methionine</keyword>
<keyword id="KW-0808">Transferase</keyword>
<proteinExistence type="evidence at transcript level"/>
<organism>
    <name type="scientific">Rattus norvegicus</name>
    <name type="common">Rat</name>
    <dbReference type="NCBI Taxonomy" id="10116"/>
    <lineage>
        <taxon>Eukaryota</taxon>
        <taxon>Metazoa</taxon>
        <taxon>Chordata</taxon>
        <taxon>Craniata</taxon>
        <taxon>Vertebrata</taxon>
        <taxon>Euteleostomi</taxon>
        <taxon>Mammalia</taxon>
        <taxon>Eutheria</taxon>
        <taxon>Euarchontoglires</taxon>
        <taxon>Glires</taxon>
        <taxon>Rodentia</taxon>
        <taxon>Myomorpha</taxon>
        <taxon>Muroidea</taxon>
        <taxon>Muridae</taxon>
        <taxon>Murinae</taxon>
        <taxon>Rattus</taxon>
    </lineage>
</organism>
<comment type="function">
    <text evidence="1">Histone methyltransferase that dimethylates histone H3 at 'Arg-17', forming asymmetric dimethylarginine (H3R17me2a), leading to activate transcription via chromatin remodeling. Maternal factor involved in epigenetic chromatin reprogramming of the paternal genome in the zygote: mediates H3R17me2a, promoting histone H3.3 incorporation in the male pronucleus, leading to TET3 recruitment and subsequent DNA demethylation.</text>
</comment>
<comment type="catalytic activity">
    <reaction evidence="1">
        <text>L-arginyl-[protein] + 2 S-adenosyl-L-methionine = N(omega),N(omega)-dimethyl-L-arginyl-[protein] + 2 S-adenosyl-L-homocysteine + 2 H(+)</text>
        <dbReference type="Rhea" id="RHEA:48096"/>
        <dbReference type="Rhea" id="RHEA-COMP:10532"/>
        <dbReference type="Rhea" id="RHEA-COMP:11991"/>
        <dbReference type="ChEBI" id="CHEBI:15378"/>
        <dbReference type="ChEBI" id="CHEBI:29965"/>
        <dbReference type="ChEBI" id="CHEBI:57856"/>
        <dbReference type="ChEBI" id="CHEBI:59789"/>
        <dbReference type="ChEBI" id="CHEBI:61897"/>
        <dbReference type="EC" id="2.1.1.319"/>
    </reaction>
    <physiologicalReaction direction="left-to-right" evidence="1">
        <dbReference type="Rhea" id="RHEA:48097"/>
    </physiologicalReaction>
</comment>
<comment type="subunit">
    <text evidence="1 2">Interacts with HSPA5, HSP90B1, TUBULIN, UGGT1 and UGGT2 (By similarity). Interacts with TET3. Interacts with STPG4 (By similarity).</text>
</comment>
<comment type="subcellular location">
    <subcellularLocation>
        <location evidence="1">Nucleus</location>
    </subcellularLocation>
    <subcellularLocation>
        <location evidence="1">Cytoplasm</location>
    </subcellularLocation>
    <text evidence="1">Localizes in male and female zygote pronucleus and cytoplasm.</text>
</comment>
<comment type="similarity">
    <text evidence="3">Belongs to the methyltransferase superfamily. METTL23 family.</text>
</comment>
<dbReference type="EC" id="2.1.1.319" evidence="1"/>
<dbReference type="EMBL" id="BC086594">
    <property type="protein sequence ID" value="AAH86594.1"/>
    <property type="molecule type" value="mRNA"/>
</dbReference>
<dbReference type="RefSeq" id="NP_001008284.1">
    <property type="nucleotide sequence ID" value="NM_001008283.1"/>
</dbReference>
<dbReference type="SMR" id="Q5RJL2"/>
<dbReference type="FunCoup" id="Q5RJL2">
    <property type="interactions" value="2398"/>
</dbReference>
<dbReference type="STRING" id="10116.ENSRNOP00000000266"/>
<dbReference type="PhosphoSitePlus" id="Q5RJL2"/>
<dbReference type="PaxDb" id="10116-ENSRNOP00000000266"/>
<dbReference type="Ensembl" id="ENSRNOT00000000266.4">
    <property type="protein sequence ID" value="ENSRNOP00000000266.3"/>
    <property type="gene ID" value="ENSRNOG00000000249.6"/>
</dbReference>
<dbReference type="GeneID" id="287918"/>
<dbReference type="KEGG" id="rno:287918"/>
<dbReference type="AGR" id="RGD:1306284"/>
<dbReference type="CTD" id="124512"/>
<dbReference type="RGD" id="1306284">
    <property type="gene designation" value="Mettl23"/>
</dbReference>
<dbReference type="eggNOG" id="KOG2793">
    <property type="taxonomic scope" value="Eukaryota"/>
</dbReference>
<dbReference type="GeneTree" id="ENSGT00510000048008"/>
<dbReference type="HOGENOM" id="CLU_082022_1_0_1"/>
<dbReference type="InParanoid" id="Q5RJL2"/>
<dbReference type="OMA" id="VIGITWG"/>
<dbReference type="OrthoDB" id="407325at2759"/>
<dbReference type="PhylomeDB" id="Q5RJL2"/>
<dbReference type="PRO" id="PR:Q5RJL2"/>
<dbReference type="Proteomes" id="UP000002494">
    <property type="component" value="Chromosome 10"/>
</dbReference>
<dbReference type="Bgee" id="ENSRNOG00000000249">
    <property type="expression patterns" value="Expressed in pancreas and 19 other cell types or tissues"/>
</dbReference>
<dbReference type="GO" id="GO:0005737">
    <property type="term" value="C:cytoplasm"/>
    <property type="evidence" value="ECO:0000250"/>
    <property type="project" value="UniProtKB"/>
</dbReference>
<dbReference type="GO" id="GO:0001939">
    <property type="term" value="C:female pronucleus"/>
    <property type="evidence" value="ECO:0000250"/>
    <property type="project" value="UniProtKB"/>
</dbReference>
<dbReference type="GO" id="GO:0001940">
    <property type="term" value="C:male pronucleus"/>
    <property type="evidence" value="ECO:0000250"/>
    <property type="project" value="UniProtKB"/>
</dbReference>
<dbReference type="GO" id="GO:0005634">
    <property type="term" value="C:nucleus"/>
    <property type="evidence" value="ECO:0000266"/>
    <property type="project" value="RGD"/>
</dbReference>
<dbReference type="GO" id="GO:0032991">
    <property type="term" value="C:protein-containing complex"/>
    <property type="evidence" value="ECO:0000266"/>
    <property type="project" value="RGD"/>
</dbReference>
<dbReference type="GO" id="GO:0140297">
    <property type="term" value="F:DNA-binding transcription factor binding"/>
    <property type="evidence" value="ECO:0000266"/>
    <property type="project" value="RGD"/>
</dbReference>
<dbReference type="GO" id="GO:0031072">
    <property type="term" value="F:heat shock protein binding"/>
    <property type="evidence" value="ECO:0000266"/>
    <property type="project" value="RGD"/>
</dbReference>
<dbReference type="GO" id="GO:0035642">
    <property type="term" value="F:histone H3R17 methyltransferase activity"/>
    <property type="evidence" value="ECO:0000250"/>
    <property type="project" value="UniProtKB"/>
</dbReference>
<dbReference type="GO" id="GO:0035242">
    <property type="term" value="F:protein-arginine omega-N asymmetric methyltransferase activity"/>
    <property type="evidence" value="ECO:0007669"/>
    <property type="project" value="RHEA"/>
</dbReference>
<dbReference type="GO" id="GO:0050890">
    <property type="term" value="P:cognition"/>
    <property type="evidence" value="ECO:0000266"/>
    <property type="project" value="RGD"/>
</dbReference>
<dbReference type="GO" id="GO:0044727">
    <property type="term" value="P:epigenetic programing of male pronucleus"/>
    <property type="evidence" value="ECO:0000250"/>
    <property type="project" value="UniProtKB"/>
</dbReference>
<dbReference type="GO" id="GO:0044725">
    <property type="term" value="P:epigenetic programming in the zygotic pronuclei"/>
    <property type="evidence" value="ECO:0000250"/>
    <property type="project" value="UniProtKB"/>
</dbReference>
<dbReference type="GO" id="GO:0040029">
    <property type="term" value="P:epigenetic regulation of gene expression"/>
    <property type="evidence" value="ECO:0000318"/>
    <property type="project" value="GO_Central"/>
</dbReference>
<dbReference type="GO" id="GO:0032259">
    <property type="term" value="P:methylation"/>
    <property type="evidence" value="ECO:0007669"/>
    <property type="project" value="UniProtKB-KW"/>
</dbReference>
<dbReference type="GO" id="GO:0045944">
    <property type="term" value="P:positive regulation of transcription by RNA polymerase II"/>
    <property type="evidence" value="ECO:0000266"/>
    <property type="project" value="RGD"/>
</dbReference>
<dbReference type="FunFam" id="3.40.50.150:FF:000173">
    <property type="entry name" value="methyltransferase-like protein 23 isoform X1"/>
    <property type="match status" value="1"/>
</dbReference>
<dbReference type="Gene3D" id="3.40.50.150">
    <property type="entry name" value="Vaccinia Virus protein VP39"/>
    <property type="match status" value="1"/>
</dbReference>
<dbReference type="InterPro" id="IPR019410">
    <property type="entry name" value="Methyltransf_16"/>
</dbReference>
<dbReference type="InterPro" id="IPR029063">
    <property type="entry name" value="SAM-dependent_MTases_sf"/>
</dbReference>
<dbReference type="PANTHER" id="PTHR14614">
    <property type="entry name" value="HEPATOCELLULAR CARCINOMA-ASSOCIATED ANTIGEN"/>
    <property type="match status" value="1"/>
</dbReference>
<dbReference type="PANTHER" id="PTHR14614:SF164">
    <property type="entry name" value="HISTONE-ARGININE METHYLTRANSFERASE METTL23"/>
    <property type="match status" value="1"/>
</dbReference>
<dbReference type="Pfam" id="PF10294">
    <property type="entry name" value="Methyltransf_16"/>
    <property type="match status" value="1"/>
</dbReference>
<dbReference type="SUPFAM" id="SSF53335">
    <property type="entry name" value="S-adenosyl-L-methionine-dependent methyltransferases"/>
    <property type="match status" value="1"/>
</dbReference>
<protein>
    <recommendedName>
        <fullName evidence="3">Histone-arginine methyltransferase METTL23</fullName>
        <ecNumber evidence="1">2.1.1.319</ecNumber>
    </recommendedName>
    <alternativeName>
        <fullName evidence="3">Methyltransferase-like protein 23</fullName>
    </alternativeName>
</protein>
<name>MET23_RAT</name>